<gene>
    <name evidence="3" type="primary">AVT3B</name>
    <name evidence="5" type="ordered locus">At2g42005</name>
    <name evidence="6" type="ORF">T6D20</name>
</gene>
<name>AVT3B_ARATH</name>
<proteinExistence type="evidence at transcript level"/>
<keyword id="KW-0029">Amino-acid transport</keyword>
<keyword id="KW-0472">Membrane</keyword>
<keyword id="KW-1185">Reference proteome</keyword>
<keyword id="KW-0812">Transmembrane</keyword>
<keyword id="KW-1133">Transmembrane helix</keyword>
<keyword id="KW-0813">Transport</keyword>
<keyword id="KW-0926">Vacuole</keyword>
<sequence>MGLEEQGRAREDTPLLGKGRPLSSKFKTFANVFIAIVGAGVLGLPYAFKRTGWLMGLLTLFSVAALINHCMMLLVHIRRKLGVSNIGSFGDLGFAACGNLGRFVVDILIILSQAGFCVGYLIFIGNTLANLSKPTKSTTLMSLRHLMGVSPKSLYIWGCFPFQLGLNSIKTLTHLAPLSIFADVVDLGAMAVVIVEDIKITVVQRPQVVAFGGMSVFFYGMGVAVYAFEGVGMVLPLESETKDKDKFGKVLALSMLFIAVMYGSFGVLGYMAFGDDTMDIITANLGAGVVSSLVQLGLCINLFFTFPLMMNPVFEIVERRFWSGMYCVWLRWLLVLAVTLVALLVPNFADFLSLVGSSVCCALGFVLPSLFHLMVFKDEMEWKQRALDVGILLLGVILGVSGTWSSLTEIFQE</sequence>
<comment type="function">
    <text evidence="2">Translocates preferentially neutral amino acids from the vacuole to the cytoplasm.</text>
</comment>
<comment type="subcellular location">
    <subcellularLocation>
        <location evidence="2">Vacuole membrane</location>
        <topology evidence="1">Multi-pass membrane protein</topology>
    </subcellularLocation>
</comment>
<comment type="tissue specificity">
    <text evidence="2">Ubiquitous.</text>
</comment>
<comment type="similarity">
    <text evidence="4">Belongs to the amino acid/polyamine transporter 2 family. Amino acid/auxin permease (AAAP) (TC 2.A.18.8) subfamily.</text>
</comment>
<organism>
    <name type="scientific">Arabidopsis thaliana</name>
    <name type="common">Mouse-ear cress</name>
    <dbReference type="NCBI Taxonomy" id="3702"/>
    <lineage>
        <taxon>Eukaryota</taxon>
        <taxon>Viridiplantae</taxon>
        <taxon>Streptophyta</taxon>
        <taxon>Embryophyta</taxon>
        <taxon>Tracheophyta</taxon>
        <taxon>Spermatophyta</taxon>
        <taxon>Magnoliopsida</taxon>
        <taxon>eudicotyledons</taxon>
        <taxon>Gunneridae</taxon>
        <taxon>Pentapetalae</taxon>
        <taxon>rosids</taxon>
        <taxon>malvids</taxon>
        <taxon>Brassicales</taxon>
        <taxon>Brassicaceae</taxon>
        <taxon>Camelineae</taxon>
        <taxon>Arabidopsis</taxon>
    </lineage>
</organism>
<accession>F4ILY9</accession>
<accession>Q8GXJ5</accession>
<reference key="1">
    <citation type="journal article" date="1999" name="Nature">
        <title>Sequence and analysis of chromosome 2 of the plant Arabidopsis thaliana.</title>
        <authorList>
            <person name="Lin X."/>
            <person name="Kaul S."/>
            <person name="Rounsley S.D."/>
            <person name="Shea T.P."/>
            <person name="Benito M.-I."/>
            <person name="Town C.D."/>
            <person name="Fujii C.Y."/>
            <person name="Mason T.M."/>
            <person name="Bowman C.L."/>
            <person name="Barnstead M.E."/>
            <person name="Feldblyum T.V."/>
            <person name="Buell C.R."/>
            <person name="Ketchum K.A."/>
            <person name="Lee J.J."/>
            <person name="Ronning C.M."/>
            <person name="Koo H.L."/>
            <person name="Moffat K.S."/>
            <person name="Cronin L.A."/>
            <person name="Shen M."/>
            <person name="Pai G."/>
            <person name="Van Aken S."/>
            <person name="Umayam L."/>
            <person name="Tallon L.J."/>
            <person name="Gill J.E."/>
            <person name="Adams M.D."/>
            <person name="Carrera A.J."/>
            <person name="Creasy T.H."/>
            <person name="Goodman H.M."/>
            <person name="Somerville C.R."/>
            <person name="Copenhaver G.P."/>
            <person name="Preuss D."/>
            <person name="Nierman W.C."/>
            <person name="White O."/>
            <person name="Eisen J.A."/>
            <person name="Salzberg S.L."/>
            <person name="Fraser C.M."/>
            <person name="Venter J.C."/>
        </authorList>
    </citation>
    <scope>NUCLEOTIDE SEQUENCE [LARGE SCALE GENOMIC DNA]</scope>
    <source>
        <strain>cv. Columbia</strain>
    </source>
</reference>
<reference key="2">
    <citation type="journal article" date="2017" name="Plant J.">
        <title>Araport11: a complete reannotation of the Arabidopsis thaliana reference genome.</title>
        <authorList>
            <person name="Cheng C.Y."/>
            <person name="Krishnakumar V."/>
            <person name="Chan A.P."/>
            <person name="Thibaud-Nissen F."/>
            <person name="Schobel S."/>
            <person name="Town C.D."/>
        </authorList>
    </citation>
    <scope>GENOME REANNOTATION</scope>
    <source>
        <strain>cv. Columbia</strain>
    </source>
</reference>
<reference key="3">
    <citation type="journal article" date="2002" name="Science">
        <title>Functional annotation of a full-length Arabidopsis cDNA collection.</title>
        <authorList>
            <person name="Seki M."/>
            <person name="Narusaka M."/>
            <person name="Kamiya A."/>
            <person name="Ishida J."/>
            <person name="Satou M."/>
            <person name="Sakurai T."/>
            <person name="Nakajima M."/>
            <person name="Enju A."/>
            <person name="Akiyama K."/>
            <person name="Oono Y."/>
            <person name="Muramatsu M."/>
            <person name="Hayashizaki Y."/>
            <person name="Kawai J."/>
            <person name="Carninci P."/>
            <person name="Itoh M."/>
            <person name="Ishii Y."/>
            <person name="Arakawa T."/>
            <person name="Shibata K."/>
            <person name="Shinagawa A."/>
            <person name="Shinozaki K."/>
        </authorList>
    </citation>
    <scope>NUCLEOTIDE SEQUENCE [LARGE SCALE MRNA]</scope>
    <source>
        <strain>cv. Columbia</strain>
    </source>
</reference>
<reference key="4">
    <citation type="journal article" date="2017" name="FEBS Lett.">
        <title>Functional identification of AtAVT3, a family of vacuolar amino acid transporters, in Arabidopsis.</title>
        <authorList>
            <person name="Fujiki Y."/>
            <person name="Teshima H."/>
            <person name="Kashiwao S."/>
            <person name="Kawano-Kawada M."/>
            <person name="Ohsumi Y."/>
            <person name="Kakinuma Y."/>
            <person name="Sekito T."/>
        </authorList>
    </citation>
    <scope>GENE FAMILY</scope>
    <scope>NOMENCLATURE</scope>
    <scope>SUBCELLULAR LOCATION</scope>
    <scope>FUNCTION</scope>
    <scope>TISSUE SPECIFICITY</scope>
</reference>
<dbReference type="EMBL" id="U90439">
    <property type="status" value="NOT_ANNOTATED_CDS"/>
    <property type="molecule type" value="Genomic_DNA"/>
</dbReference>
<dbReference type="EMBL" id="CP002685">
    <property type="protein sequence ID" value="AEC10062.1"/>
    <property type="molecule type" value="Genomic_DNA"/>
</dbReference>
<dbReference type="EMBL" id="AK118204">
    <property type="protein sequence ID" value="BAC42826.1"/>
    <property type="molecule type" value="mRNA"/>
</dbReference>
<dbReference type="RefSeq" id="NP_850361.1">
    <property type="nucleotide sequence ID" value="NM_180030.3"/>
</dbReference>
<dbReference type="SMR" id="F4ILY9"/>
<dbReference type="FunCoup" id="F4ILY9">
    <property type="interactions" value="870"/>
</dbReference>
<dbReference type="STRING" id="3702.F4ILY9"/>
<dbReference type="PaxDb" id="3702-AT2G42005.1"/>
<dbReference type="EnsemblPlants" id="AT2G42005.1">
    <property type="protein sequence ID" value="AT2G42005.1"/>
    <property type="gene ID" value="AT2G42005"/>
</dbReference>
<dbReference type="GeneID" id="818801"/>
<dbReference type="Gramene" id="AT2G42005.1">
    <property type="protein sequence ID" value="AT2G42005.1"/>
    <property type="gene ID" value="AT2G42005"/>
</dbReference>
<dbReference type="KEGG" id="ath:AT2G42005"/>
<dbReference type="Araport" id="AT2G42005"/>
<dbReference type="TAIR" id="AT2G42005">
    <property type="gene designation" value="ATAVT3B"/>
</dbReference>
<dbReference type="eggNOG" id="KOG1304">
    <property type="taxonomic scope" value="Eukaryota"/>
</dbReference>
<dbReference type="HOGENOM" id="CLU_009646_6_0_1"/>
<dbReference type="InParanoid" id="F4ILY9"/>
<dbReference type="OMA" id="INYDCGI"/>
<dbReference type="PRO" id="PR:F4ILY9"/>
<dbReference type="Proteomes" id="UP000006548">
    <property type="component" value="Chromosome 2"/>
</dbReference>
<dbReference type="ExpressionAtlas" id="F4ILY9">
    <property type="expression patterns" value="baseline and differential"/>
</dbReference>
<dbReference type="GO" id="GO:0005774">
    <property type="term" value="C:vacuolar membrane"/>
    <property type="evidence" value="ECO:0000314"/>
    <property type="project" value="UniProtKB"/>
</dbReference>
<dbReference type="GO" id="GO:0015175">
    <property type="term" value="F:neutral L-amino acid transmembrane transporter activity"/>
    <property type="evidence" value="ECO:0000314"/>
    <property type="project" value="UniProtKB"/>
</dbReference>
<dbReference type="GO" id="GO:0015804">
    <property type="term" value="P:neutral amino acid transport"/>
    <property type="evidence" value="ECO:0000314"/>
    <property type="project" value="UniProtKB"/>
</dbReference>
<dbReference type="InterPro" id="IPR013057">
    <property type="entry name" value="AA_transpt_TM"/>
</dbReference>
<dbReference type="PANTHER" id="PTHR22950">
    <property type="entry name" value="AMINO ACID TRANSPORTER"/>
    <property type="match status" value="1"/>
</dbReference>
<dbReference type="PANTHER" id="PTHR22950:SF529">
    <property type="entry name" value="AMINO ACID TRANSPORTER AVT3B"/>
    <property type="match status" value="1"/>
</dbReference>
<dbReference type="Pfam" id="PF01490">
    <property type="entry name" value="Aa_trans"/>
    <property type="match status" value="1"/>
</dbReference>
<protein>
    <recommendedName>
        <fullName evidence="4">Amino acid transporter AVT3B</fullName>
        <shortName evidence="3">AtAvt3B</shortName>
    </recommendedName>
    <alternativeName>
        <fullName evidence="4">Aromatic and neutral amino acid transporter-like protein 1</fullName>
    </alternativeName>
</protein>
<feature type="chain" id="PRO_0000433106" description="Amino acid transporter AVT3B">
    <location>
        <begin position="1"/>
        <end position="413"/>
    </location>
</feature>
<feature type="topological domain" description="Cytoplasmic" evidence="4">
    <location>
        <begin position="1"/>
        <end position="27"/>
    </location>
</feature>
<feature type="transmembrane region" description="Helical; Name=1" evidence="1">
    <location>
        <begin position="28"/>
        <end position="48"/>
    </location>
</feature>
<feature type="topological domain" description="Vacuolar" evidence="4">
    <location>
        <begin position="49"/>
        <end position="54"/>
    </location>
</feature>
<feature type="transmembrane region" description="Helical; Name=2" evidence="1">
    <location>
        <begin position="55"/>
        <end position="75"/>
    </location>
</feature>
<feature type="topological domain" description="Cytoplasmic" evidence="4">
    <location>
        <begin position="76"/>
        <end position="103"/>
    </location>
</feature>
<feature type="transmembrane region" description="Helical; Name=3" evidence="1">
    <location>
        <begin position="104"/>
        <end position="124"/>
    </location>
</feature>
<feature type="topological domain" description="Vacuolar" evidence="4">
    <location>
        <begin position="125"/>
        <end position="145"/>
    </location>
</feature>
<feature type="transmembrane region" description="Helical; Name=4" evidence="1">
    <location>
        <begin position="146"/>
        <end position="166"/>
    </location>
</feature>
<feature type="topological domain" description="Cytoplasmic" evidence="4">
    <location>
        <begin position="167"/>
        <end position="174"/>
    </location>
</feature>
<feature type="transmembrane region" description="Helical; Name=5" evidence="1">
    <location>
        <begin position="175"/>
        <end position="195"/>
    </location>
</feature>
<feature type="topological domain" description="Vacuolar" evidence="4">
    <location>
        <begin position="196"/>
        <end position="207"/>
    </location>
</feature>
<feature type="transmembrane region" description="Helical; Name=6" evidence="1">
    <location>
        <begin position="208"/>
        <end position="228"/>
    </location>
</feature>
<feature type="topological domain" description="Cytoplasmic" evidence="4">
    <location>
        <begin position="229"/>
        <end position="249"/>
    </location>
</feature>
<feature type="transmembrane region" description="Helical; Name=7" evidence="1">
    <location>
        <begin position="250"/>
        <end position="270"/>
    </location>
</feature>
<feature type="topological domain" description="Vacuolar" evidence="4">
    <location>
        <begin position="271"/>
        <end position="288"/>
    </location>
</feature>
<feature type="transmembrane region" description="Helical; Name=8" evidence="1">
    <location>
        <begin position="289"/>
        <end position="309"/>
    </location>
</feature>
<feature type="topological domain" description="Cytoplasmic" evidence="4">
    <location>
        <begin position="310"/>
        <end position="331"/>
    </location>
</feature>
<feature type="transmembrane region" description="Helical; Name=9" evidence="1">
    <location>
        <begin position="332"/>
        <end position="352"/>
    </location>
</feature>
<feature type="topological domain" description="Vacuolar" evidence="4">
    <location>
        <begin position="353"/>
        <end position="355"/>
    </location>
</feature>
<feature type="transmembrane region" description="Helical; Name=10" evidence="1">
    <location>
        <begin position="356"/>
        <end position="376"/>
    </location>
</feature>
<feature type="topological domain" description="Cytoplasmic" evidence="4">
    <location>
        <begin position="377"/>
        <end position="390"/>
    </location>
</feature>
<feature type="transmembrane region" description="Helical; Name=11" evidence="1">
    <location>
        <begin position="391"/>
        <end position="411"/>
    </location>
</feature>
<feature type="topological domain" description="Vacuolar" evidence="4">
    <location>
        <begin position="412"/>
        <end position="413"/>
    </location>
</feature>
<feature type="sequence conflict" description="In Ref. 3; BAC42826." evidence="4" ref="3">
    <original>S</original>
    <variation>G</variation>
    <location>
        <position position="24"/>
    </location>
</feature>
<evidence type="ECO:0000255" key="1"/>
<evidence type="ECO:0000269" key="2">
    <source>
    </source>
</evidence>
<evidence type="ECO:0000303" key="3">
    <source>
    </source>
</evidence>
<evidence type="ECO:0000305" key="4"/>
<evidence type="ECO:0000312" key="5">
    <source>
        <dbReference type="Araport" id="AT2G42005"/>
    </source>
</evidence>
<evidence type="ECO:0000312" key="6">
    <source>
        <dbReference type="EMBL" id="U90439"/>
    </source>
</evidence>